<accession>B3TNB4</accession>
<gene>
    <name evidence="1" type="primary">matK</name>
</gene>
<keyword id="KW-0150">Chloroplast</keyword>
<keyword id="KW-0507">mRNA processing</keyword>
<keyword id="KW-0934">Plastid</keyword>
<keyword id="KW-1185">Reference proteome</keyword>
<keyword id="KW-0694">RNA-binding</keyword>
<keyword id="KW-0819">tRNA processing</keyword>
<proteinExistence type="inferred from homology"/>
<reference key="1">
    <citation type="journal article" date="2008" name="BMC Res. Notes">
        <title>The complete chloroplast genome sequence of Brachypodium distachyon: sequence comparison and phylogenetic analysis of eight grass plastomes.</title>
        <authorList>
            <person name="Bortiri E."/>
            <person name="Coleman-Derr D."/>
            <person name="Lazo G.R."/>
            <person name="Anderson O.D."/>
            <person name="Gu Y.Q."/>
        </authorList>
    </citation>
    <scope>NUCLEOTIDE SEQUENCE [LARGE SCALE GENOMIC DNA]</scope>
    <source>
        <strain>cv. Bd21</strain>
    </source>
</reference>
<organism>
    <name type="scientific">Brachypodium distachyon</name>
    <name type="common">Purple false brome</name>
    <name type="synonym">Trachynia distachya</name>
    <dbReference type="NCBI Taxonomy" id="15368"/>
    <lineage>
        <taxon>Eukaryota</taxon>
        <taxon>Viridiplantae</taxon>
        <taxon>Streptophyta</taxon>
        <taxon>Embryophyta</taxon>
        <taxon>Tracheophyta</taxon>
        <taxon>Spermatophyta</taxon>
        <taxon>Magnoliopsida</taxon>
        <taxon>Liliopsida</taxon>
        <taxon>Poales</taxon>
        <taxon>Poaceae</taxon>
        <taxon>BOP clade</taxon>
        <taxon>Pooideae</taxon>
        <taxon>Stipodae</taxon>
        <taxon>Brachypodieae</taxon>
        <taxon>Brachypodium</taxon>
    </lineage>
</organism>
<sequence>MEKFEEISEKHKSRQQYFVYPLLFQEFLYAFAHDYGLNDSEPVEIVSCNNKKFSSLLVKRLIIRMYQQNFWINSVNHPNQDRLLDYKNFFYSEFFSQILSEGFSIVVEIPFSLRESFCPKEKEIPKFQNLRSIHSIFSFLEDKFLHLHYLSHIEIPYPIHLEILVQLLQYHIQDVPSLHLLRFFLNYNSNWNSFITSIKSFFLLKKENKRLFRFLYNSYVSEYEFFLLFLRKQSSCLPLASSGGFLERIHFSRKMEHFGIMDPGFFRKTLWFFMDPLMHYVRYQGKAILASKGTLFLKKKWKWYLVNFCQYSFSFWTQPRRIHLNQLANSCFDFLGYLSSVPKSPLLVRNQMLENSFLIDTRMIKFDTIVPATLLIGSLSKAQFCTGSGHPISKPIWTELSDWDILDRFGQICKNLFHYHSGSSKKRTLYRLKYILRLSCARTLARKHKSTVRTFMQRLGSVFLEEFFTEEDPVFSLMFTKTTLFYFRGSHSERIWYLDIIRINGLVNPRN</sequence>
<feature type="chain" id="PRO_0000355916" description="Maturase K">
    <location>
        <begin position="1"/>
        <end position="511"/>
    </location>
</feature>
<comment type="function">
    <text evidence="1">Usually encoded in the trnK tRNA gene intron. Probably assists in splicing its own and other chloroplast group II introns.</text>
</comment>
<comment type="subcellular location">
    <subcellularLocation>
        <location>Plastid</location>
        <location>Chloroplast</location>
    </subcellularLocation>
</comment>
<comment type="similarity">
    <text evidence="1">Belongs to the intron maturase 2 family. MatK subfamily.</text>
</comment>
<comment type="sequence caution" evidence="2">
    <conflict type="erroneous initiation">
        <sequence resource="EMBL-CDS" id="ACF08622"/>
    </conflict>
</comment>
<evidence type="ECO:0000255" key="1">
    <source>
        <dbReference type="HAMAP-Rule" id="MF_01390"/>
    </source>
</evidence>
<evidence type="ECO:0000305" key="2"/>
<name>MATK_BRADI</name>
<geneLocation type="chloroplast"/>
<dbReference type="EMBL" id="EU325680">
    <property type="protein sequence ID" value="ACF08622.1"/>
    <property type="status" value="ALT_INIT"/>
    <property type="molecule type" value="Genomic_DNA"/>
</dbReference>
<dbReference type="RefSeq" id="YP_002000469.2">
    <property type="nucleotide sequence ID" value="NC_011032.1"/>
</dbReference>
<dbReference type="FunCoup" id="B3TNB4">
    <property type="interactions" value="4"/>
</dbReference>
<dbReference type="STRING" id="15368.B3TNB4"/>
<dbReference type="GeneID" id="6439874"/>
<dbReference type="KEGG" id="bdi:6439874"/>
<dbReference type="InParanoid" id="B3TNB4"/>
<dbReference type="Proteomes" id="UP000008810">
    <property type="component" value="Chloroplast"/>
</dbReference>
<dbReference type="GO" id="GO:0009507">
    <property type="term" value="C:chloroplast"/>
    <property type="evidence" value="ECO:0007669"/>
    <property type="project" value="UniProtKB-SubCell"/>
</dbReference>
<dbReference type="GO" id="GO:0003723">
    <property type="term" value="F:RNA binding"/>
    <property type="evidence" value="ECO:0007669"/>
    <property type="project" value="UniProtKB-KW"/>
</dbReference>
<dbReference type="GO" id="GO:0006397">
    <property type="term" value="P:mRNA processing"/>
    <property type="evidence" value="ECO:0007669"/>
    <property type="project" value="UniProtKB-KW"/>
</dbReference>
<dbReference type="GO" id="GO:0008380">
    <property type="term" value="P:RNA splicing"/>
    <property type="evidence" value="ECO:0007669"/>
    <property type="project" value="UniProtKB-UniRule"/>
</dbReference>
<dbReference type="GO" id="GO:0008033">
    <property type="term" value="P:tRNA processing"/>
    <property type="evidence" value="ECO:0007669"/>
    <property type="project" value="UniProtKB-KW"/>
</dbReference>
<dbReference type="HAMAP" id="MF_01390">
    <property type="entry name" value="MatK"/>
    <property type="match status" value="1"/>
</dbReference>
<dbReference type="InterPro" id="IPR024937">
    <property type="entry name" value="Domain_X"/>
</dbReference>
<dbReference type="InterPro" id="IPR002866">
    <property type="entry name" value="Maturase_MatK"/>
</dbReference>
<dbReference type="InterPro" id="IPR024942">
    <property type="entry name" value="Maturase_MatK_N"/>
</dbReference>
<dbReference type="PANTHER" id="PTHR34811">
    <property type="entry name" value="MATURASE K"/>
    <property type="match status" value="1"/>
</dbReference>
<dbReference type="PANTHER" id="PTHR34811:SF1">
    <property type="entry name" value="MATURASE K"/>
    <property type="match status" value="1"/>
</dbReference>
<dbReference type="Pfam" id="PF01348">
    <property type="entry name" value="Intron_maturas2"/>
    <property type="match status" value="1"/>
</dbReference>
<dbReference type="Pfam" id="PF01824">
    <property type="entry name" value="MatK_N"/>
    <property type="match status" value="1"/>
</dbReference>
<protein>
    <recommendedName>
        <fullName evidence="1">Maturase K</fullName>
    </recommendedName>
    <alternativeName>
        <fullName evidence="1">Intron maturase</fullName>
    </alternativeName>
</protein>